<evidence type="ECO:0000250" key="1"/>
<evidence type="ECO:0000250" key="2">
    <source>
        <dbReference type="UniProtKB" id="B3FIS6"/>
    </source>
</evidence>
<evidence type="ECO:0000255" key="3"/>
<evidence type="ECO:0000305" key="4"/>
<protein>
    <recommendedName>
        <fullName>U3-theraphotoxin-Hhn1o</fullName>
        <shortName>U3-TRTX-Hhn1o</shortName>
    </recommendedName>
    <alternativeName>
        <fullName>Hainantoxin-VIII-7</fullName>
        <shortName>HNTX-VIII-7</shortName>
    </alternativeName>
</protein>
<reference key="1">
    <citation type="journal article" date="2010" name="J. Proteome Res.">
        <title>Molecular diversification of peptide toxins from the tarantula Haplopelma hainanum (Ornithoctonus hainana) venom based on transcriptomic, peptidomic, and genomic analyses.</title>
        <authorList>
            <person name="Tang X."/>
            <person name="Zhang Y."/>
            <person name="Hu W."/>
            <person name="Xu D."/>
            <person name="Tao H."/>
            <person name="Yang X."/>
            <person name="Li Y."/>
            <person name="Jiang L."/>
            <person name="Liang S."/>
        </authorList>
    </citation>
    <scope>NUCLEOTIDE SEQUENCE [LARGE SCALE MRNA]</scope>
    <source>
        <tissue>Venom gland</tissue>
    </source>
</reference>
<accession>D2Y2G8</accession>
<dbReference type="EMBL" id="GU293045">
    <property type="protein sequence ID" value="ADB56861.1"/>
    <property type="molecule type" value="mRNA"/>
</dbReference>
<dbReference type="ArachnoServer" id="AS001914">
    <property type="toxin name" value="U3-theraphotoxin-Hhn1o"/>
</dbReference>
<dbReference type="GO" id="GO:0005576">
    <property type="term" value="C:extracellular region"/>
    <property type="evidence" value="ECO:0007669"/>
    <property type="project" value="UniProtKB-SubCell"/>
</dbReference>
<dbReference type="GO" id="GO:0008200">
    <property type="term" value="F:ion channel inhibitor activity"/>
    <property type="evidence" value="ECO:0007669"/>
    <property type="project" value="InterPro"/>
</dbReference>
<dbReference type="GO" id="GO:0090729">
    <property type="term" value="F:toxin activity"/>
    <property type="evidence" value="ECO:0007669"/>
    <property type="project" value="UniProtKB-KW"/>
</dbReference>
<dbReference type="InterPro" id="IPR011696">
    <property type="entry name" value="Huwentoxin-1"/>
</dbReference>
<dbReference type="Pfam" id="PF07740">
    <property type="entry name" value="Toxin_12"/>
    <property type="match status" value="1"/>
</dbReference>
<dbReference type="SUPFAM" id="SSF57059">
    <property type="entry name" value="omega toxin-like"/>
    <property type="match status" value="1"/>
</dbReference>
<feature type="signal peptide" evidence="3">
    <location>
        <begin position="1"/>
        <end position="24"/>
    </location>
</feature>
<feature type="propeptide" id="PRO_0000400627" evidence="1">
    <location>
        <begin position="25"/>
        <end position="52"/>
    </location>
</feature>
<feature type="peptide" id="PRO_0000400628" description="U3-theraphotoxin-Hhn1o">
    <location>
        <begin position="53"/>
        <end position="87"/>
    </location>
</feature>
<feature type="disulfide bond" evidence="2">
    <location>
        <begin position="54"/>
        <end position="67"/>
    </location>
</feature>
<feature type="disulfide bond" evidence="2">
    <location>
        <begin position="61"/>
        <end position="72"/>
    </location>
</feature>
<sequence>MVNMKASMFLTFAGLVLLFVVCYASESEEKEFPKEMLSSIFAVDNDFKQEERDCAGYMRECKEKLRCSGYVCSSRWKWCVLPAPWRR</sequence>
<proteinExistence type="evidence at transcript level"/>
<organism>
    <name type="scientific">Cyriopagopus hainanus</name>
    <name type="common">Chinese bird spider</name>
    <name type="synonym">Haplopelma hainanum</name>
    <dbReference type="NCBI Taxonomy" id="209901"/>
    <lineage>
        <taxon>Eukaryota</taxon>
        <taxon>Metazoa</taxon>
        <taxon>Ecdysozoa</taxon>
        <taxon>Arthropoda</taxon>
        <taxon>Chelicerata</taxon>
        <taxon>Arachnida</taxon>
        <taxon>Araneae</taxon>
        <taxon>Mygalomorphae</taxon>
        <taxon>Theraphosidae</taxon>
        <taxon>Haplopelma</taxon>
    </lineage>
</organism>
<keyword id="KW-1015">Disulfide bond</keyword>
<keyword id="KW-0872">Ion channel impairing toxin</keyword>
<keyword id="KW-0960">Knottin</keyword>
<keyword id="KW-0964">Secreted</keyword>
<keyword id="KW-0732">Signal</keyword>
<keyword id="KW-0800">Toxin</keyword>
<name>H8G01_CYRHA</name>
<comment type="function">
    <text evidence="1">Ion channel inhibitor.</text>
</comment>
<comment type="subcellular location">
    <subcellularLocation>
        <location evidence="1">Secreted</location>
    </subcellularLocation>
</comment>
<comment type="tissue specificity">
    <text>Expressed by the venom gland.</text>
</comment>
<comment type="domain">
    <text evidence="1">The presence of a 'disulfide through disulfide knot' structurally defines this protein as a knottin.</text>
</comment>
<comment type="similarity">
    <text evidence="4">Belongs to the neurotoxin 10 (Hwtx-1) family. 51 (Hntx-8) subfamily. Hntx-8 sub-subfamily.</text>
</comment>
<comment type="caution">
    <text evidence="4">While it is structurally defined as a knottin it lacks the conserved Cys residue in position 66.</text>
</comment>